<accession>Q3U288</accession>
<accession>Q3U341</accession>
<accession>Q3U396</accession>
<accession>Q6P9R3</accession>
<accession>Q8BJH0</accession>
<accession>Q8BTL6</accession>
<accession>Q8BZ48</accession>
<dbReference type="EMBL" id="AK036711">
    <property type="protein sequence ID" value="BAC29546.1"/>
    <property type="molecule type" value="mRNA"/>
</dbReference>
<dbReference type="EMBL" id="AK083979">
    <property type="protein sequence ID" value="BAC39083.1"/>
    <property type="molecule type" value="mRNA"/>
</dbReference>
<dbReference type="EMBL" id="AK089457">
    <property type="protein sequence ID" value="BAC40892.1"/>
    <property type="status" value="ALT_INIT"/>
    <property type="molecule type" value="mRNA"/>
</dbReference>
<dbReference type="EMBL" id="AK154871">
    <property type="protein sequence ID" value="BAE32892.1"/>
    <property type="molecule type" value="mRNA"/>
</dbReference>
<dbReference type="EMBL" id="AK154953">
    <property type="protein sequence ID" value="BAE32948.1"/>
    <property type="molecule type" value="mRNA"/>
</dbReference>
<dbReference type="EMBL" id="AK155416">
    <property type="protein sequence ID" value="BAE33254.1"/>
    <property type="molecule type" value="mRNA"/>
</dbReference>
<dbReference type="EMBL" id="BC058640">
    <property type="protein sequence ID" value="AAH58640.3"/>
    <property type="status" value="ALT_INIT"/>
    <property type="molecule type" value="mRNA"/>
</dbReference>
<dbReference type="EMBL" id="BC060641">
    <property type="protein sequence ID" value="AAH60641.1"/>
    <property type="status" value="ALT_INIT"/>
    <property type="molecule type" value="mRNA"/>
</dbReference>
<dbReference type="CCDS" id="CCDS52279.1">
    <molecule id="Q3U288-3"/>
</dbReference>
<dbReference type="CCDS" id="CCDS52280.1">
    <molecule id="Q3U288-1"/>
</dbReference>
<dbReference type="RefSeq" id="NP_001139471.1">
    <molecule id="Q3U288-1"/>
    <property type="nucleotide sequence ID" value="NM_001145999.1"/>
</dbReference>
<dbReference type="RefSeq" id="NP_001139472.1">
    <molecule id="Q3U288-3"/>
    <property type="nucleotide sequence ID" value="NM_001146000.1"/>
</dbReference>
<dbReference type="RefSeq" id="NP_780642.3">
    <molecule id="Q3U288-1"/>
    <property type="nucleotide sequence ID" value="NM_175433.5"/>
</dbReference>
<dbReference type="RefSeq" id="XP_006540805.1">
    <molecule id="Q3U288-1"/>
    <property type="nucleotide sequence ID" value="XM_006540742.3"/>
</dbReference>
<dbReference type="RefSeq" id="XP_006540806.1">
    <molecule id="Q3U288-1"/>
    <property type="nucleotide sequence ID" value="XM_006540743.3"/>
</dbReference>
<dbReference type="RefSeq" id="XP_006540807.1">
    <molecule id="Q3U288-1"/>
    <property type="nucleotide sequence ID" value="XM_006540744.3"/>
</dbReference>
<dbReference type="SMR" id="Q3U288"/>
<dbReference type="BioGRID" id="229060">
    <property type="interactions" value="33"/>
</dbReference>
<dbReference type="FunCoup" id="Q3U288">
    <property type="interactions" value="100"/>
</dbReference>
<dbReference type="STRING" id="10090.ENSMUSP00000132361"/>
<dbReference type="iPTMnet" id="Q3U288"/>
<dbReference type="PhosphoSitePlus" id="Q3U288"/>
<dbReference type="PaxDb" id="10090-ENSMUSP00000050577"/>
<dbReference type="PeptideAtlas" id="Q3U288"/>
<dbReference type="ProteomicsDB" id="275032">
    <molecule id="Q3U288-1"/>
</dbReference>
<dbReference type="ProteomicsDB" id="275033">
    <molecule id="Q3U288-2"/>
</dbReference>
<dbReference type="ProteomicsDB" id="275034">
    <molecule id="Q3U288-3"/>
</dbReference>
<dbReference type="DNASU" id="209225"/>
<dbReference type="Ensembl" id="ENSMUST00000049680.10">
    <molecule id="Q3U288-1"/>
    <property type="protein sequence ID" value="ENSMUSP00000050577.9"/>
    <property type="gene ID" value="ENSMUSG00000048897.16"/>
</dbReference>
<dbReference type="Ensembl" id="ENSMUST00000164056.9">
    <molecule id="Q3U288-1"/>
    <property type="protein sequence ID" value="ENSMUSP00000132361.3"/>
    <property type="gene ID" value="ENSMUSG00000048897.16"/>
</dbReference>
<dbReference type="Ensembl" id="ENSMUST00000166250.8">
    <molecule id="Q3U288-3"/>
    <property type="protein sequence ID" value="ENSMUSP00000129357.2"/>
    <property type="gene ID" value="ENSMUSG00000048897.16"/>
</dbReference>
<dbReference type="Ensembl" id="ENSMUST00000206039.2">
    <molecule id="Q3U288-2"/>
    <property type="protein sequence ID" value="ENSMUSP00000146148.2"/>
    <property type="gene ID" value="ENSMUSG00000048897.16"/>
</dbReference>
<dbReference type="GeneID" id="209225"/>
<dbReference type="KEGG" id="mmu:209225"/>
<dbReference type="UCSC" id="uc009hzi.2">
    <molecule id="Q3U288-3"/>
    <property type="organism name" value="mouse"/>
</dbReference>
<dbReference type="UCSC" id="uc009hzj.2">
    <molecule id="Q3U288-1"/>
    <property type="organism name" value="mouse"/>
</dbReference>
<dbReference type="UCSC" id="uc009hzk.2">
    <molecule id="Q3U288-2"/>
    <property type="organism name" value="mouse"/>
</dbReference>
<dbReference type="AGR" id="MGI:1921747"/>
<dbReference type="CTD" id="209225"/>
<dbReference type="MGI" id="MGI:1921747">
    <property type="gene designation" value="Zfp710"/>
</dbReference>
<dbReference type="VEuPathDB" id="HostDB:ENSMUSG00000048897"/>
<dbReference type="eggNOG" id="KOG1721">
    <property type="taxonomic scope" value="Eukaryota"/>
</dbReference>
<dbReference type="GeneTree" id="ENSGT00940000155498"/>
<dbReference type="HOGENOM" id="CLU_002678_54_1_1"/>
<dbReference type="InParanoid" id="Q3U288"/>
<dbReference type="OMA" id="KEMAYYS"/>
<dbReference type="OrthoDB" id="7295497at2759"/>
<dbReference type="PhylomeDB" id="Q3U288"/>
<dbReference type="TreeFam" id="TF331510"/>
<dbReference type="Reactome" id="R-MMU-212436">
    <property type="pathway name" value="Generic Transcription Pathway"/>
</dbReference>
<dbReference type="BioGRID-ORCS" id="209225">
    <property type="hits" value="5 hits in 80 CRISPR screens"/>
</dbReference>
<dbReference type="ChiTaRS" id="Zfp710">
    <property type="organism name" value="mouse"/>
</dbReference>
<dbReference type="PRO" id="PR:Q3U288"/>
<dbReference type="Proteomes" id="UP000000589">
    <property type="component" value="Chromosome 7"/>
</dbReference>
<dbReference type="RNAct" id="Q3U288">
    <property type="molecule type" value="protein"/>
</dbReference>
<dbReference type="Bgee" id="ENSMUSG00000048897">
    <property type="expression patterns" value="Expressed in granulocyte and 206 other cell types or tissues"/>
</dbReference>
<dbReference type="ExpressionAtlas" id="Q3U288">
    <property type="expression patterns" value="baseline and differential"/>
</dbReference>
<dbReference type="GO" id="GO:0005634">
    <property type="term" value="C:nucleus"/>
    <property type="evidence" value="ECO:0007669"/>
    <property type="project" value="UniProtKB-SubCell"/>
</dbReference>
<dbReference type="GO" id="GO:0003677">
    <property type="term" value="F:DNA binding"/>
    <property type="evidence" value="ECO:0007669"/>
    <property type="project" value="UniProtKB-KW"/>
</dbReference>
<dbReference type="GO" id="GO:0008270">
    <property type="term" value="F:zinc ion binding"/>
    <property type="evidence" value="ECO:0007669"/>
    <property type="project" value="UniProtKB-KW"/>
</dbReference>
<dbReference type="FunFam" id="3.30.160.60:FF:000161">
    <property type="entry name" value="Zinc finger protein 366"/>
    <property type="match status" value="1"/>
</dbReference>
<dbReference type="FunFam" id="3.30.160.60:FF:000186">
    <property type="entry name" value="Zinc finger protein 366"/>
    <property type="match status" value="1"/>
</dbReference>
<dbReference type="FunFam" id="3.30.160.60:FF:000203">
    <property type="entry name" value="Zinc finger protein 366"/>
    <property type="match status" value="1"/>
</dbReference>
<dbReference type="FunFam" id="3.30.160.60:FF:001180">
    <property type="entry name" value="Zinc finger protein 366"/>
    <property type="match status" value="1"/>
</dbReference>
<dbReference type="FunFam" id="3.30.160.60:FF:000182">
    <property type="entry name" value="zinc finger protein 366"/>
    <property type="match status" value="1"/>
</dbReference>
<dbReference type="FunFam" id="3.30.160.60:FF:000191">
    <property type="entry name" value="zinc finger protein 366"/>
    <property type="match status" value="1"/>
</dbReference>
<dbReference type="FunFam" id="3.30.160.60:FF:000451">
    <property type="entry name" value="Zinc finger protein 710"/>
    <property type="match status" value="1"/>
</dbReference>
<dbReference type="FunFam" id="3.30.160.60:FF:000502">
    <property type="entry name" value="Zinc finger protein 710"/>
    <property type="match status" value="1"/>
</dbReference>
<dbReference type="FunFam" id="3.30.160.60:FF:000649">
    <property type="entry name" value="Zinc finger protein 710"/>
    <property type="match status" value="1"/>
</dbReference>
<dbReference type="FunFam" id="3.30.160.60:FF:000684">
    <property type="entry name" value="Zinc finger protein 710"/>
    <property type="match status" value="1"/>
</dbReference>
<dbReference type="Gene3D" id="3.30.160.60">
    <property type="entry name" value="Classic Zinc Finger"/>
    <property type="match status" value="10"/>
</dbReference>
<dbReference type="InterPro" id="IPR036236">
    <property type="entry name" value="Znf_C2H2_sf"/>
</dbReference>
<dbReference type="InterPro" id="IPR013087">
    <property type="entry name" value="Znf_C2H2_type"/>
</dbReference>
<dbReference type="PANTHER" id="PTHR24390:SF159">
    <property type="entry name" value="GROWTH FACTOR INDEPENDENT 1 TRANSCRIPTIONAL REPRESSOR"/>
    <property type="match status" value="1"/>
</dbReference>
<dbReference type="PANTHER" id="PTHR24390">
    <property type="entry name" value="ZINC FINGER PROTEIN"/>
    <property type="match status" value="1"/>
</dbReference>
<dbReference type="Pfam" id="PF00096">
    <property type="entry name" value="zf-C2H2"/>
    <property type="match status" value="10"/>
</dbReference>
<dbReference type="Pfam" id="PF13912">
    <property type="entry name" value="zf-C2H2_6"/>
    <property type="match status" value="1"/>
</dbReference>
<dbReference type="SMART" id="SM00355">
    <property type="entry name" value="ZnF_C2H2"/>
    <property type="match status" value="11"/>
</dbReference>
<dbReference type="SUPFAM" id="SSF57667">
    <property type="entry name" value="beta-beta-alpha zinc fingers"/>
    <property type="match status" value="6"/>
</dbReference>
<dbReference type="PROSITE" id="PS00028">
    <property type="entry name" value="ZINC_FINGER_C2H2_1"/>
    <property type="match status" value="11"/>
</dbReference>
<dbReference type="PROSITE" id="PS50157">
    <property type="entry name" value="ZINC_FINGER_C2H2_2"/>
    <property type="match status" value="11"/>
</dbReference>
<comment type="function">
    <text>May be involved in transcriptional regulation.</text>
</comment>
<comment type="subcellular location">
    <subcellularLocation>
        <location evidence="5">Nucleus</location>
    </subcellularLocation>
</comment>
<comment type="alternative products">
    <event type="alternative splicing"/>
    <isoform>
        <id>Q3U288-1</id>
        <name>1</name>
        <sequence type="displayed"/>
    </isoform>
    <isoform>
        <id>Q3U288-2</id>
        <name>2</name>
        <sequence type="described" ref="VSP_018152"/>
    </isoform>
    <isoform>
        <id>Q3U288-3</id>
        <name>3</name>
        <sequence type="described" ref="VSP_026943"/>
    </isoform>
</comment>
<comment type="similarity">
    <text evidence="5">Belongs to the krueppel C2H2-type zinc-finger protein family.</text>
</comment>
<comment type="sequence caution" evidence="5">
    <conflict type="erroneous initiation">
        <sequence resource="EMBL-CDS" id="AAH58640"/>
    </conflict>
</comment>
<comment type="sequence caution" evidence="5">
    <conflict type="erroneous initiation">
        <sequence resource="EMBL-CDS" id="AAH60641"/>
    </conflict>
</comment>
<comment type="sequence caution" evidence="5">
    <conflict type="erroneous initiation">
        <sequence resource="EMBL-CDS" id="BAC40892"/>
    </conflict>
</comment>
<organism>
    <name type="scientific">Mus musculus</name>
    <name type="common">Mouse</name>
    <dbReference type="NCBI Taxonomy" id="10090"/>
    <lineage>
        <taxon>Eukaryota</taxon>
        <taxon>Metazoa</taxon>
        <taxon>Chordata</taxon>
        <taxon>Craniata</taxon>
        <taxon>Vertebrata</taxon>
        <taxon>Euteleostomi</taxon>
        <taxon>Mammalia</taxon>
        <taxon>Eutheria</taxon>
        <taxon>Euarchontoglires</taxon>
        <taxon>Glires</taxon>
        <taxon>Rodentia</taxon>
        <taxon>Myomorpha</taxon>
        <taxon>Muroidea</taxon>
        <taxon>Muridae</taxon>
        <taxon>Murinae</taxon>
        <taxon>Mus</taxon>
        <taxon>Mus</taxon>
    </lineage>
</organism>
<feature type="chain" id="PRO_0000233709" description="Zinc finger protein 710">
    <location>
        <begin position="1"/>
        <end position="666"/>
    </location>
</feature>
<feature type="zinc finger region" description="C2H2-type 1" evidence="2">
    <location>
        <begin position="297"/>
        <end position="319"/>
    </location>
</feature>
<feature type="zinc finger region" description="C2H2-type 2" evidence="2">
    <location>
        <begin position="325"/>
        <end position="347"/>
    </location>
</feature>
<feature type="zinc finger region" description="C2H2-type 3" evidence="2">
    <location>
        <begin position="353"/>
        <end position="375"/>
    </location>
</feature>
<feature type="zinc finger region" description="C2H2-type 4" evidence="2">
    <location>
        <begin position="381"/>
        <end position="403"/>
    </location>
</feature>
<feature type="zinc finger region" description="C2H2-type 5" evidence="2">
    <location>
        <begin position="409"/>
        <end position="431"/>
    </location>
</feature>
<feature type="zinc finger region" description="C2H2-type 6" evidence="2">
    <location>
        <begin position="437"/>
        <end position="459"/>
    </location>
</feature>
<feature type="zinc finger region" description="C2H2-type 7" evidence="2">
    <location>
        <begin position="465"/>
        <end position="487"/>
    </location>
</feature>
<feature type="zinc finger region" description="C2H2-type 8" evidence="2">
    <location>
        <begin position="493"/>
        <end position="515"/>
    </location>
</feature>
<feature type="zinc finger region" description="C2H2-type 9" evidence="2">
    <location>
        <begin position="521"/>
        <end position="543"/>
    </location>
</feature>
<feature type="zinc finger region" description="C2H2-type 10" evidence="2">
    <location>
        <begin position="549"/>
        <end position="571"/>
    </location>
</feature>
<feature type="zinc finger region" description="C2H2-type 11" evidence="2">
    <location>
        <begin position="577"/>
        <end position="600"/>
    </location>
</feature>
<feature type="region of interest" description="Disordered" evidence="3">
    <location>
        <begin position="113"/>
        <end position="141"/>
    </location>
</feature>
<feature type="cross-link" description="Glycyl lysine isopeptide (Lys-Gly) (interchain with G-Cter in SUMO2)" evidence="1">
    <location>
        <position position="110"/>
    </location>
</feature>
<feature type="cross-link" description="Glycyl lysine isopeptide (Lys-Gly) (interchain with G-Cter in SUMO2)" evidence="1">
    <location>
        <position position="113"/>
    </location>
</feature>
<feature type="cross-link" description="Glycyl lysine isopeptide (Lys-Gly) (interchain with G-Cter in SUMO2)" evidence="1">
    <location>
        <position position="379"/>
    </location>
</feature>
<feature type="splice variant" id="VSP_018152" description="In isoform 2." evidence="4">
    <original>DPMMELAGPDPSELDNHQEMEDFEENAYTYSSVDSSAEASTLTEQAMKEMAYYNVL</original>
    <variation>GGWAVRSGQSRIDSSMAHSGVSSPIRGVGGLAKAETSMRWAQVWREGEPGEPLWQ</variation>
    <location>
        <begin position="611"/>
        <end position="666"/>
    </location>
</feature>
<feature type="splice variant" id="VSP_026943" description="In isoform 3." evidence="4">
    <original>DPMMELAGPDPSELDNHQEMEDFEENAYTYSSVDSSAEASTLTEQAMKEMAYYNVL</original>
    <variation>GMLSTAARAAGCSYASSSSTQSAILCGVQGQPETP</variation>
    <location>
        <begin position="611"/>
        <end position="666"/>
    </location>
</feature>
<feature type="sequence conflict" description="In Ref. 1; BAE32948." evidence="5" ref="1">
    <original>M</original>
    <variation>L</variation>
    <location>
        <position position="5"/>
    </location>
</feature>
<feature type="sequence conflict" description="In Ref. 1; BAE32948." evidence="5" ref="1">
    <original>D</original>
    <variation>E</variation>
    <location>
        <position position="259"/>
    </location>
</feature>
<feature type="sequence conflict" description="In Ref. 1; BAC39083." evidence="5" ref="1">
    <original>H</original>
    <variation>R</variation>
    <location>
        <position position="409"/>
    </location>
</feature>
<feature type="sequence conflict" description="In Ref. 1; BAE32948." evidence="5" ref="1">
    <original>D</original>
    <variation>G</variation>
    <location>
        <position position="620"/>
    </location>
</feature>
<name>ZN710_MOUSE</name>
<evidence type="ECO:0000250" key="1">
    <source>
        <dbReference type="UniProtKB" id="Q8N1W2"/>
    </source>
</evidence>
<evidence type="ECO:0000255" key="2">
    <source>
        <dbReference type="PROSITE-ProRule" id="PRU00042"/>
    </source>
</evidence>
<evidence type="ECO:0000256" key="3">
    <source>
        <dbReference type="SAM" id="MobiDB-lite"/>
    </source>
</evidence>
<evidence type="ECO:0000303" key="4">
    <source>
    </source>
</evidence>
<evidence type="ECO:0000305" key="5"/>
<proteinExistence type="evidence at transcript level"/>
<keyword id="KW-0025">Alternative splicing</keyword>
<keyword id="KW-0238">DNA-binding</keyword>
<keyword id="KW-1017">Isopeptide bond</keyword>
<keyword id="KW-0479">Metal-binding</keyword>
<keyword id="KW-0539">Nucleus</keyword>
<keyword id="KW-1185">Reference proteome</keyword>
<keyword id="KW-0677">Repeat</keyword>
<keyword id="KW-0804">Transcription</keyword>
<keyword id="KW-0805">Transcription regulation</keyword>
<keyword id="KW-0832">Ubl conjugation</keyword>
<keyword id="KW-0862">Zinc</keyword>
<keyword id="KW-0863">Zinc-finger</keyword>
<sequence length="666" mass="75052">MEGFMDSGTQTDAVVVLSLAQAAVLGLVSENELFGATISAEAFYPDLGPELTGTAMGEPGPPGPDIYQLACNGRALEEPPEEEVLEVEAAFEKHTRRKTRPPVRLVPKVKFEKAEEEEEQEVYEVSVPGDDKDPGPAEAPAEVASSGCEALVQSSAVKMIDLSAFSRKPRTLRHLPRTPRPELDMAPFDPPFPDPARDGFPEPSMALPGPETLPTECSFEPPHLAPLSNPEPPNMTSTTELVKPEQGFVWQESSEFEADTAGSTVERHKKAQLDRLDINVQIDDSYLVEAGDRQKRWQCRMCEKSYTSKYNLVTHILGHNGIKPHSCPHCSKLFKQPSHLQTHLLTHQGTRPHKCQVCHKAFTQTSHLKRHMLLHSEVKPYSCHFCGRGFAYPSELKAHEVKHESGRCHVCVECGLDFSTLTQLKRHLASHQGPTLYQCLECDKSFHYRSQLQNHMLKHQNVRPFVCTECGMEFSQIHHLKQHSLTHKGVKEFKCEVCGREFTLQANMKRHMLIHTSVRPYQCHICFKTFVQKQTLKTHMIVHSPVKPFKCKVCGKSFNRMYNLLGHMHLHAGSKPFKCPYCSSKFNLKGNLSRHMKVKHGVMDISLDSQDPMMELAGPDPSELDNHQEMEDFEENAYTYSSVDSSAEASTLTEQAMKEMAYYNVL</sequence>
<gene>
    <name type="primary">Znf710</name>
    <name type="synonym">Zfp710</name>
</gene>
<protein>
    <recommendedName>
        <fullName>Zinc finger protein 710</fullName>
    </recommendedName>
</protein>
<reference key="1">
    <citation type="journal article" date="2005" name="Science">
        <title>The transcriptional landscape of the mammalian genome.</title>
        <authorList>
            <person name="Carninci P."/>
            <person name="Kasukawa T."/>
            <person name="Katayama S."/>
            <person name="Gough J."/>
            <person name="Frith M.C."/>
            <person name="Maeda N."/>
            <person name="Oyama R."/>
            <person name="Ravasi T."/>
            <person name="Lenhard B."/>
            <person name="Wells C."/>
            <person name="Kodzius R."/>
            <person name="Shimokawa K."/>
            <person name="Bajic V.B."/>
            <person name="Brenner S.E."/>
            <person name="Batalov S."/>
            <person name="Forrest A.R."/>
            <person name="Zavolan M."/>
            <person name="Davis M.J."/>
            <person name="Wilming L.G."/>
            <person name="Aidinis V."/>
            <person name="Allen J.E."/>
            <person name="Ambesi-Impiombato A."/>
            <person name="Apweiler R."/>
            <person name="Aturaliya R.N."/>
            <person name="Bailey T.L."/>
            <person name="Bansal M."/>
            <person name="Baxter L."/>
            <person name="Beisel K.W."/>
            <person name="Bersano T."/>
            <person name="Bono H."/>
            <person name="Chalk A.M."/>
            <person name="Chiu K.P."/>
            <person name="Choudhary V."/>
            <person name="Christoffels A."/>
            <person name="Clutterbuck D.R."/>
            <person name="Crowe M.L."/>
            <person name="Dalla E."/>
            <person name="Dalrymple B.P."/>
            <person name="de Bono B."/>
            <person name="Della Gatta G."/>
            <person name="di Bernardo D."/>
            <person name="Down T."/>
            <person name="Engstrom P."/>
            <person name="Fagiolini M."/>
            <person name="Faulkner G."/>
            <person name="Fletcher C.F."/>
            <person name="Fukushima T."/>
            <person name="Furuno M."/>
            <person name="Futaki S."/>
            <person name="Gariboldi M."/>
            <person name="Georgii-Hemming P."/>
            <person name="Gingeras T.R."/>
            <person name="Gojobori T."/>
            <person name="Green R.E."/>
            <person name="Gustincich S."/>
            <person name="Harbers M."/>
            <person name="Hayashi Y."/>
            <person name="Hensch T.K."/>
            <person name="Hirokawa N."/>
            <person name="Hill D."/>
            <person name="Huminiecki L."/>
            <person name="Iacono M."/>
            <person name="Ikeo K."/>
            <person name="Iwama A."/>
            <person name="Ishikawa T."/>
            <person name="Jakt M."/>
            <person name="Kanapin A."/>
            <person name="Katoh M."/>
            <person name="Kawasawa Y."/>
            <person name="Kelso J."/>
            <person name="Kitamura H."/>
            <person name="Kitano H."/>
            <person name="Kollias G."/>
            <person name="Krishnan S.P."/>
            <person name="Kruger A."/>
            <person name="Kummerfeld S.K."/>
            <person name="Kurochkin I.V."/>
            <person name="Lareau L.F."/>
            <person name="Lazarevic D."/>
            <person name="Lipovich L."/>
            <person name="Liu J."/>
            <person name="Liuni S."/>
            <person name="McWilliam S."/>
            <person name="Madan Babu M."/>
            <person name="Madera M."/>
            <person name="Marchionni L."/>
            <person name="Matsuda H."/>
            <person name="Matsuzawa S."/>
            <person name="Miki H."/>
            <person name="Mignone F."/>
            <person name="Miyake S."/>
            <person name="Morris K."/>
            <person name="Mottagui-Tabar S."/>
            <person name="Mulder N."/>
            <person name="Nakano N."/>
            <person name="Nakauchi H."/>
            <person name="Ng P."/>
            <person name="Nilsson R."/>
            <person name="Nishiguchi S."/>
            <person name="Nishikawa S."/>
            <person name="Nori F."/>
            <person name="Ohara O."/>
            <person name="Okazaki Y."/>
            <person name="Orlando V."/>
            <person name="Pang K.C."/>
            <person name="Pavan W.J."/>
            <person name="Pavesi G."/>
            <person name="Pesole G."/>
            <person name="Petrovsky N."/>
            <person name="Piazza S."/>
            <person name="Reed J."/>
            <person name="Reid J.F."/>
            <person name="Ring B.Z."/>
            <person name="Ringwald M."/>
            <person name="Rost B."/>
            <person name="Ruan Y."/>
            <person name="Salzberg S.L."/>
            <person name="Sandelin A."/>
            <person name="Schneider C."/>
            <person name="Schoenbach C."/>
            <person name="Sekiguchi K."/>
            <person name="Semple C.A."/>
            <person name="Seno S."/>
            <person name="Sessa L."/>
            <person name="Sheng Y."/>
            <person name="Shibata Y."/>
            <person name="Shimada H."/>
            <person name="Shimada K."/>
            <person name="Silva D."/>
            <person name="Sinclair B."/>
            <person name="Sperling S."/>
            <person name="Stupka E."/>
            <person name="Sugiura K."/>
            <person name="Sultana R."/>
            <person name="Takenaka Y."/>
            <person name="Taki K."/>
            <person name="Tammoja K."/>
            <person name="Tan S.L."/>
            <person name="Tang S."/>
            <person name="Taylor M.S."/>
            <person name="Tegner J."/>
            <person name="Teichmann S.A."/>
            <person name="Ueda H.R."/>
            <person name="van Nimwegen E."/>
            <person name="Verardo R."/>
            <person name="Wei C.L."/>
            <person name="Yagi K."/>
            <person name="Yamanishi H."/>
            <person name="Zabarovsky E."/>
            <person name="Zhu S."/>
            <person name="Zimmer A."/>
            <person name="Hide W."/>
            <person name="Bult C."/>
            <person name="Grimmond S.M."/>
            <person name="Teasdale R.D."/>
            <person name="Liu E.T."/>
            <person name="Brusic V."/>
            <person name="Quackenbush J."/>
            <person name="Wahlestedt C."/>
            <person name="Mattick J.S."/>
            <person name="Hume D.A."/>
            <person name="Kai C."/>
            <person name="Sasaki D."/>
            <person name="Tomaru Y."/>
            <person name="Fukuda S."/>
            <person name="Kanamori-Katayama M."/>
            <person name="Suzuki M."/>
            <person name="Aoki J."/>
            <person name="Arakawa T."/>
            <person name="Iida J."/>
            <person name="Imamura K."/>
            <person name="Itoh M."/>
            <person name="Kato T."/>
            <person name="Kawaji H."/>
            <person name="Kawagashira N."/>
            <person name="Kawashima T."/>
            <person name="Kojima M."/>
            <person name="Kondo S."/>
            <person name="Konno H."/>
            <person name="Nakano K."/>
            <person name="Ninomiya N."/>
            <person name="Nishio T."/>
            <person name="Okada M."/>
            <person name="Plessy C."/>
            <person name="Shibata K."/>
            <person name="Shiraki T."/>
            <person name="Suzuki S."/>
            <person name="Tagami M."/>
            <person name="Waki K."/>
            <person name="Watahiki A."/>
            <person name="Okamura-Oho Y."/>
            <person name="Suzuki H."/>
            <person name="Kawai J."/>
            <person name="Hayashizaki Y."/>
        </authorList>
    </citation>
    <scope>NUCLEOTIDE SEQUENCE [LARGE SCALE MRNA] (ISOFORMS 1; 2 AND 3)</scope>
    <source>
        <strain>C57BL/6J</strain>
        <strain>NOD</strain>
        <tissue>Bone</tissue>
        <tissue>Dendritic cell</tissue>
        <tissue>Spinal ganglion</tissue>
    </source>
</reference>
<reference key="2">
    <citation type="journal article" date="2004" name="Genome Res.">
        <title>The status, quality, and expansion of the NIH full-length cDNA project: the Mammalian Gene Collection (MGC).</title>
        <authorList>
            <consortium name="The MGC Project Team"/>
        </authorList>
    </citation>
    <scope>NUCLEOTIDE SEQUENCE [LARGE SCALE MRNA] (ISOFORM 1)</scope>
    <source>
        <strain>C57BL/6J</strain>
        <tissue>Brain</tissue>
    </source>
</reference>